<keyword id="KW-0002">3D-structure</keyword>
<keyword id="KW-0025">Alternative splicing</keyword>
<keyword id="KW-0175">Coiled coil</keyword>
<keyword id="KW-0963">Cytoplasm</keyword>
<keyword id="KW-0472">Membrane</keyword>
<keyword id="KW-0597">Phosphoprotein</keyword>
<keyword id="KW-1185">Reference proteome</keyword>
<evidence type="ECO:0000250" key="1"/>
<evidence type="ECO:0000250" key="2">
    <source>
        <dbReference type="UniProtKB" id="Q9Z1T4"/>
    </source>
</evidence>
<evidence type="ECO:0000255" key="3"/>
<evidence type="ECO:0000255" key="4">
    <source>
        <dbReference type="PROSITE-ProRule" id="PRU00143"/>
    </source>
</evidence>
<evidence type="ECO:0000255" key="5">
    <source>
        <dbReference type="PROSITE-ProRule" id="PRU00145"/>
    </source>
</evidence>
<evidence type="ECO:0000255" key="6">
    <source>
        <dbReference type="PROSITE-ProRule" id="PRU00184"/>
    </source>
</evidence>
<evidence type="ECO:0000255" key="7">
    <source>
        <dbReference type="PROSITE-ProRule" id="PRU00621"/>
    </source>
</evidence>
<evidence type="ECO:0000256" key="8">
    <source>
        <dbReference type="SAM" id="MobiDB-lite"/>
    </source>
</evidence>
<evidence type="ECO:0000303" key="9">
    <source>
    </source>
</evidence>
<evidence type="ECO:0000305" key="10"/>
<evidence type="ECO:0007744" key="11">
    <source>
    </source>
</evidence>
<evidence type="ECO:0007744" key="12">
    <source>
    </source>
</evidence>
<proteinExistence type="evidence at protein level"/>
<name>CNKR2_MOUSE</name>
<protein>
    <recommendedName>
        <fullName>Connector enhancer of kinase suppressor of ras 2</fullName>
        <shortName>Connector enhancer of KSR 2</shortName>
    </recommendedName>
    <alternativeName>
        <fullName>CNK homolog protein 2</fullName>
        <shortName>CNK2</shortName>
    </alternativeName>
</protein>
<accession>Q80YA9</accession>
<accession>Q80TP2</accession>
<organism>
    <name type="scientific">Mus musculus</name>
    <name type="common">Mouse</name>
    <dbReference type="NCBI Taxonomy" id="10090"/>
    <lineage>
        <taxon>Eukaryota</taxon>
        <taxon>Metazoa</taxon>
        <taxon>Chordata</taxon>
        <taxon>Craniata</taxon>
        <taxon>Vertebrata</taxon>
        <taxon>Euteleostomi</taxon>
        <taxon>Mammalia</taxon>
        <taxon>Eutheria</taxon>
        <taxon>Euarchontoglires</taxon>
        <taxon>Glires</taxon>
        <taxon>Rodentia</taxon>
        <taxon>Myomorpha</taxon>
        <taxon>Muroidea</taxon>
        <taxon>Muridae</taxon>
        <taxon>Murinae</taxon>
        <taxon>Mus</taxon>
        <taxon>Mus</taxon>
    </lineage>
</organism>
<reference key="1">
    <citation type="journal article" date="2003" name="DNA Res.">
        <title>Prediction of the coding sequences of mouse homologues of KIAA gene: II. The complete nucleotide sequences of 400 mouse KIAA-homologous cDNAs identified by screening of terminal sequences of cDNA clones randomly sampled from size-fractionated libraries.</title>
        <authorList>
            <person name="Okazaki N."/>
            <person name="Kikuno R."/>
            <person name="Ohara R."/>
            <person name="Inamoto S."/>
            <person name="Aizawa H."/>
            <person name="Yuasa S."/>
            <person name="Nakajima D."/>
            <person name="Nagase T."/>
            <person name="Ohara O."/>
            <person name="Koga H."/>
        </authorList>
    </citation>
    <scope>NUCLEOTIDE SEQUENCE [LARGE SCALE MRNA] (ISOFORM 2)</scope>
    <source>
        <tissue>Brain</tissue>
    </source>
</reference>
<reference key="2">
    <citation type="journal article" date="2004" name="Genome Res.">
        <title>The status, quality, and expansion of the NIH full-length cDNA project: the Mammalian Gene Collection (MGC).</title>
        <authorList>
            <consortium name="The MGC Project Team"/>
        </authorList>
    </citation>
    <scope>NUCLEOTIDE SEQUENCE [LARGE SCALE MRNA] (ISOFORM 1)</scope>
    <source>
        <strain>C57BL/6J</strain>
        <tissue>Brain</tissue>
    </source>
</reference>
<reference key="3">
    <citation type="journal article" date="2004" name="Mol. Cell. Proteomics">
        <title>Phosphoproteomic analysis of the developing mouse brain.</title>
        <authorList>
            <person name="Ballif B.A."/>
            <person name="Villen J."/>
            <person name="Beausoleil S.A."/>
            <person name="Schwartz D."/>
            <person name="Gygi S.P."/>
        </authorList>
    </citation>
    <scope>IDENTIFICATION BY MASS SPECTROMETRY [LARGE SCALE ANALYSIS]</scope>
    <source>
        <tissue>Embryonic brain</tissue>
    </source>
</reference>
<reference key="4">
    <citation type="journal article" date="2006" name="Mol. Cell. Proteomics">
        <title>Comprehensive identification of phosphorylation sites in postsynaptic density preparations.</title>
        <authorList>
            <person name="Trinidad J.C."/>
            <person name="Specht C.G."/>
            <person name="Thalhammer A."/>
            <person name="Schoepfer R."/>
            <person name="Burlingame A.L."/>
        </authorList>
    </citation>
    <scope>PHOSPHORYLATION [LARGE SCALE ANALYSIS] AT SER-906</scope>
    <scope>IDENTIFICATION BY MASS SPECTROMETRY [LARGE SCALE ANALYSIS]</scope>
    <source>
        <tissue>Brain</tissue>
    </source>
</reference>
<reference key="5">
    <citation type="journal article" date="2010" name="Cell">
        <title>A tissue-specific atlas of mouse protein phosphorylation and expression.</title>
        <authorList>
            <person name="Huttlin E.L."/>
            <person name="Jedrychowski M.P."/>
            <person name="Elias J.E."/>
            <person name="Goswami T."/>
            <person name="Rad R."/>
            <person name="Beausoleil S.A."/>
            <person name="Villen J."/>
            <person name="Haas W."/>
            <person name="Sowa M.E."/>
            <person name="Gygi S.P."/>
        </authorList>
    </citation>
    <scope>PHOSPHORYLATION [LARGE SCALE ANALYSIS] AT SER-12; SER-338; SER-390; TYR-683; SER-685; SER-687 AND SER-906</scope>
    <scope>IDENTIFICATION BY MASS SPECTROMETRY [LARGE SCALE ANALYSIS]</scope>
    <source>
        <tissue>Brain</tissue>
        <tissue>Lung</tissue>
    </source>
</reference>
<dbReference type="EMBL" id="AK122399">
    <property type="protein sequence ID" value="BAC65681.1"/>
    <property type="status" value="ALT_INIT"/>
    <property type="molecule type" value="mRNA"/>
</dbReference>
<dbReference type="EMBL" id="BC043093">
    <property type="protein sequence ID" value="AAH43093.1"/>
    <property type="molecule type" value="mRNA"/>
</dbReference>
<dbReference type="EMBL" id="BC060716">
    <property type="protein sequence ID" value="AAH60716.1"/>
    <property type="molecule type" value="mRNA"/>
</dbReference>
<dbReference type="CCDS" id="CCDS30501.1">
    <molecule id="Q80YA9-1"/>
</dbReference>
<dbReference type="RefSeq" id="NP_001297648.1">
    <molecule id="Q80YA9-2"/>
    <property type="nucleotide sequence ID" value="NM_001310719.1"/>
</dbReference>
<dbReference type="RefSeq" id="NP_808419.1">
    <molecule id="Q80YA9-1"/>
    <property type="nucleotide sequence ID" value="NM_177751.3"/>
</dbReference>
<dbReference type="PDB" id="9K1L">
    <property type="method" value="X-ray"/>
    <property type="resolution" value="2.85 A"/>
    <property type="chains" value="A=1-314"/>
</dbReference>
<dbReference type="PDBsum" id="9K1L"/>
<dbReference type="SMR" id="Q80YA9"/>
<dbReference type="BioGRID" id="232826">
    <property type="interactions" value="52"/>
</dbReference>
<dbReference type="FunCoup" id="Q80YA9">
    <property type="interactions" value="474"/>
</dbReference>
<dbReference type="IntAct" id="Q80YA9">
    <property type="interactions" value="46"/>
</dbReference>
<dbReference type="MINT" id="Q80YA9"/>
<dbReference type="STRING" id="10090.ENSMUSP00000026750"/>
<dbReference type="GlyGen" id="Q80YA9">
    <property type="glycosylation" value="6 sites, 1 O-linked glycan (6 sites)"/>
</dbReference>
<dbReference type="iPTMnet" id="Q80YA9"/>
<dbReference type="PhosphoSitePlus" id="Q80YA9"/>
<dbReference type="SwissPalm" id="Q80YA9"/>
<dbReference type="PaxDb" id="10090-ENSMUSP00000026750"/>
<dbReference type="PeptideAtlas" id="Q80YA9"/>
<dbReference type="ProteomicsDB" id="283451">
    <molecule id="Q80YA9-1"/>
</dbReference>
<dbReference type="ProteomicsDB" id="283452">
    <molecule id="Q80YA9-2"/>
</dbReference>
<dbReference type="Antibodypedia" id="456">
    <property type="antibodies" value="108 antibodies from 18 providers"/>
</dbReference>
<dbReference type="DNASU" id="245684"/>
<dbReference type="Ensembl" id="ENSMUST00000026750.15">
    <molecule id="Q80YA9-1"/>
    <property type="protein sequence ID" value="ENSMUSP00000026750.9"/>
    <property type="gene ID" value="ENSMUSG00000025658.17"/>
</dbReference>
<dbReference type="GeneID" id="245684"/>
<dbReference type="KEGG" id="mmu:245684"/>
<dbReference type="UCSC" id="uc009ush.1">
    <molecule id="Q80YA9-1"/>
    <property type="organism name" value="mouse"/>
</dbReference>
<dbReference type="UCSC" id="uc009usi.1">
    <molecule id="Q80YA9-2"/>
    <property type="organism name" value="mouse"/>
</dbReference>
<dbReference type="AGR" id="MGI:2661175"/>
<dbReference type="CTD" id="22866"/>
<dbReference type="MGI" id="MGI:2661175">
    <property type="gene designation" value="Cnksr2"/>
</dbReference>
<dbReference type="VEuPathDB" id="HostDB:ENSMUSG00000025658"/>
<dbReference type="eggNOG" id="KOG1738">
    <property type="taxonomic scope" value="Eukaryota"/>
</dbReference>
<dbReference type="GeneTree" id="ENSGT00940000156709"/>
<dbReference type="InParanoid" id="Q80YA9"/>
<dbReference type="OMA" id="XAREGEV"/>
<dbReference type="OrthoDB" id="74412at2759"/>
<dbReference type="PhylomeDB" id="Q80YA9"/>
<dbReference type="TreeFam" id="TF326495"/>
<dbReference type="Reactome" id="R-MMU-5674135">
    <property type="pathway name" value="MAP2K and MAPK activation"/>
</dbReference>
<dbReference type="BioGRID-ORCS" id="245684">
    <property type="hits" value="5 hits in 79 CRISPR screens"/>
</dbReference>
<dbReference type="CD-CODE" id="CE726F99">
    <property type="entry name" value="Postsynaptic density"/>
</dbReference>
<dbReference type="ChiTaRS" id="Cnksr2">
    <property type="organism name" value="mouse"/>
</dbReference>
<dbReference type="PRO" id="PR:Q80YA9"/>
<dbReference type="Proteomes" id="UP000000589">
    <property type="component" value="Chromosome X"/>
</dbReference>
<dbReference type="RNAct" id="Q80YA9">
    <property type="molecule type" value="protein"/>
</dbReference>
<dbReference type="Bgee" id="ENSMUSG00000025658">
    <property type="expression patterns" value="Expressed in primary visual cortex and 125 other cell types or tissues"/>
</dbReference>
<dbReference type="ExpressionAtlas" id="Q80YA9">
    <property type="expression patterns" value="baseline and differential"/>
</dbReference>
<dbReference type="GO" id="GO:0005737">
    <property type="term" value="C:cytoplasm"/>
    <property type="evidence" value="ECO:0007669"/>
    <property type="project" value="UniProtKB-SubCell"/>
</dbReference>
<dbReference type="GO" id="GO:0099147">
    <property type="term" value="C:extrinsic component of postsynaptic density membrane"/>
    <property type="evidence" value="ECO:0007669"/>
    <property type="project" value="Ensembl"/>
</dbReference>
<dbReference type="GO" id="GO:0098978">
    <property type="term" value="C:glutamatergic synapse"/>
    <property type="evidence" value="ECO:0000314"/>
    <property type="project" value="SynGO"/>
</dbReference>
<dbReference type="GO" id="GO:0043025">
    <property type="term" value="C:neuronal cell body"/>
    <property type="evidence" value="ECO:0007669"/>
    <property type="project" value="Ensembl"/>
</dbReference>
<dbReference type="GO" id="GO:0005886">
    <property type="term" value="C:plasma membrane"/>
    <property type="evidence" value="ECO:0000266"/>
    <property type="project" value="MGI"/>
</dbReference>
<dbReference type="GO" id="GO:0014069">
    <property type="term" value="C:postsynaptic density"/>
    <property type="evidence" value="ECO:0000314"/>
    <property type="project" value="MGI"/>
</dbReference>
<dbReference type="GO" id="GO:0042802">
    <property type="term" value="F:identical protein binding"/>
    <property type="evidence" value="ECO:0007669"/>
    <property type="project" value="Ensembl"/>
</dbReference>
<dbReference type="GO" id="GO:0019901">
    <property type="term" value="F:protein kinase binding"/>
    <property type="evidence" value="ECO:0000266"/>
    <property type="project" value="MGI"/>
</dbReference>
<dbReference type="GO" id="GO:0035556">
    <property type="term" value="P:intracellular signal transduction"/>
    <property type="evidence" value="ECO:0000266"/>
    <property type="project" value="MGI"/>
</dbReference>
<dbReference type="GO" id="GO:0099084">
    <property type="term" value="P:postsynaptic specialization organization"/>
    <property type="evidence" value="ECO:0000314"/>
    <property type="project" value="SynGO"/>
</dbReference>
<dbReference type="GO" id="GO:0009966">
    <property type="term" value="P:regulation of signal transduction"/>
    <property type="evidence" value="ECO:0007669"/>
    <property type="project" value="InterPro"/>
</dbReference>
<dbReference type="CDD" id="cd06748">
    <property type="entry name" value="PDZ_CNK1_2_3-like"/>
    <property type="match status" value="1"/>
</dbReference>
<dbReference type="CDD" id="cd01260">
    <property type="entry name" value="PH_CNK_mammalian-like"/>
    <property type="match status" value="1"/>
</dbReference>
<dbReference type="CDD" id="cd09511">
    <property type="entry name" value="SAM_CNK1_2_3-suppressor"/>
    <property type="match status" value="1"/>
</dbReference>
<dbReference type="FunFam" id="1.10.150.50:FF:000019">
    <property type="entry name" value="Connector enhancer of kinase suppressor of Ras 2"/>
    <property type="match status" value="1"/>
</dbReference>
<dbReference type="FunFam" id="2.30.29.30:FF:000092">
    <property type="entry name" value="Connector enhancer of kinase suppressor of Ras 2"/>
    <property type="match status" value="1"/>
</dbReference>
<dbReference type="FunFam" id="2.30.42.10:FF:000060">
    <property type="entry name" value="Connector enhancer of kinase suppressor of Ras 2"/>
    <property type="match status" value="1"/>
</dbReference>
<dbReference type="Gene3D" id="2.30.42.10">
    <property type="match status" value="1"/>
</dbReference>
<dbReference type="Gene3D" id="2.30.29.30">
    <property type="entry name" value="Pleckstrin-homology domain (PH domain)/Phosphotyrosine-binding domain (PTB)"/>
    <property type="match status" value="1"/>
</dbReference>
<dbReference type="Gene3D" id="1.10.150.50">
    <property type="entry name" value="Transcription Factor, Ets-1"/>
    <property type="match status" value="1"/>
</dbReference>
<dbReference type="InterPro" id="IPR049628">
    <property type="entry name" value="CNK1-3_SAM"/>
</dbReference>
<dbReference type="InterPro" id="IPR010599">
    <property type="entry name" value="CNK2/3_dom"/>
</dbReference>
<dbReference type="InterPro" id="IPR051566">
    <property type="entry name" value="CNKSR"/>
</dbReference>
<dbReference type="InterPro" id="IPR017874">
    <property type="entry name" value="CRIC_domain"/>
</dbReference>
<dbReference type="InterPro" id="IPR001478">
    <property type="entry name" value="PDZ"/>
</dbReference>
<dbReference type="InterPro" id="IPR036034">
    <property type="entry name" value="PDZ_sf"/>
</dbReference>
<dbReference type="InterPro" id="IPR011993">
    <property type="entry name" value="PH-like_dom_sf"/>
</dbReference>
<dbReference type="InterPro" id="IPR001849">
    <property type="entry name" value="PH_domain"/>
</dbReference>
<dbReference type="InterPro" id="IPR001660">
    <property type="entry name" value="SAM"/>
</dbReference>
<dbReference type="InterPro" id="IPR013761">
    <property type="entry name" value="SAM/pointed_sf"/>
</dbReference>
<dbReference type="PANTHER" id="PTHR12844">
    <property type="entry name" value="CONNECTOR ENCHANCER OF KINASE SUPPRESSOR OF RAS"/>
    <property type="match status" value="1"/>
</dbReference>
<dbReference type="PANTHER" id="PTHR12844:SF21">
    <property type="entry name" value="CONNECTOR ENHANCER OF KINASE SUPPRESSOR OF RAS 2"/>
    <property type="match status" value="1"/>
</dbReference>
<dbReference type="Pfam" id="PF06663">
    <property type="entry name" value="CNK2_3_dom"/>
    <property type="match status" value="1"/>
</dbReference>
<dbReference type="Pfam" id="PF10534">
    <property type="entry name" value="CRIC_ras_sig"/>
    <property type="match status" value="1"/>
</dbReference>
<dbReference type="Pfam" id="PF00595">
    <property type="entry name" value="PDZ"/>
    <property type="match status" value="1"/>
</dbReference>
<dbReference type="Pfam" id="PF00169">
    <property type="entry name" value="PH"/>
    <property type="match status" value="1"/>
</dbReference>
<dbReference type="Pfam" id="PF00536">
    <property type="entry name" value="SAM_1"/>
    <property type="match status" value="1"/>
</dbReference>
<dbReference type="SMART" id="SM00228">
    <property type="entry name" value="PDZ"/>
    <property type="match status" value="1"/>
</dbReference>
<dbReference type="SMART" id="SM00233">
    <property type="entry name" value="PH"/>
    <property type="match status" value="1"/>
</dbReference>
<dbReference type="SMART" id="SM00454">
    <property type="entry name" value="SAM"/>
    <property type="match status" value="1"/>
</dbReference>
<dbReference type="SUPFAM" id="SSF50156">
    <property type="entry name" value="PDZ domain-like"/>
    <property type="match status" value="1"/>
</dbReference>
<dbReference type="SUPFAM" id="SSF50729">
    <property type="entry name" value="PH domain-like"/>
    <property type="match status" value="1"/>
</dbReference>
<dbReference type="SUPFAM" id="SSF47769">
    <property type="entry name" value="SAM/Pointed domain"/>
    <property type="match status" value="1"/>
</dbReference>
<dbReference type="PROSITE" id="PS51290">
    <property type="entry name" value="CRIC"/>
    <property type="match status" value="1"/>
</dbReference>
<dbReference type="PROSITE" id="PS50106">
    <property type="entry name" value="PDZ"/>
    <property type="match status" value="1"/>
</dbReference>
<dbReference type="PROSITE" id="PS50003">
    <property type="entry name" value="PH_DOMAIN"/>
    <property type="match status" value="1"/>
</dbReference>
<dbReference type="PROSITE" id="PS50105">
    <property type="entry name" value="SAM_DOMAIN"/>
    <property type="match status" value="1"/>
</dbReference>
<feature type="chain" id="PRO_0000089971" description="Connector enhancer of kinase suppressor of ras 2">
    <location>
        <begin position="1"/>
        <end position="1032"/>
    </location>
</feature>
<feature type="domain" description="SAM" evidence="6">
    <location>
        <begin position="11"/>
        <end position="76"/>
    </location>
</feature>
<feature type="domain" description="CRIC" evidence="7">
    <location>
        <begin position="84"/>
        <end position="178"/>
    </location>
</feature>
<feature type="domain" description="PDZ" evidence="4">
    <location>
        <begin position="215"/>
        <end position="297"/>
    </location>
</feature>
<feature type="domain" description="DUF1170">
    <location>
        <begin position="302"/>
        <end position="515"/>
    </location>
</feature>
<feature type="domain" description="PH" evidence="5">
    <location>
        <begin position="570"/>
        <end position="669"/>
    </location>
</feature>
<feature type="region of interest" description="Disordered" evidence="8">
    <location>
        <begin position="324"/>
        <end position="349"/>
    </location>
</feature>
<feature type="region of interest" description="Disordered" evidence="8">
    <location>
        <begin position="480"/>
        <end position="509"/>
    </location>
</feature>
<feature type="region of interest" description="Disordered" evidence="8">
    <location>
        <begin position="538"/>
        <end position="558"/>
    </location>
</feature>
<feature type="region of interest" description="Disordered" evidence="8">
    <location>
        <begin position="682"/>
        <end position="766"/>
    </location>
</feature>
<feature type="region of interest" description="Disordered" evidence="8">
    <location>
        <begin position="864"/>
        <end position="900"/>
    </location>
</feature>
<feature type="coiled-coil region" evidence="3">
    <location>
        <begin position="874"/>
        <end position="917"/>
    </location>
</feature>
<feature type="compositionally biased region" description="Low complexity" evidence="8">
    <location>
        <begin position="324"/>
        <end position="340"/>
    </location>
</feature>
<feature type="compositionally biased region" description="Basic residues" evidence="8">
    <location>
        <begin position="545"/>
        <end position="558"/>
    </location>
</feature>
<feature type="compositionally biased region" description="Acidic residues" evidence="8">
    <location>
        <begin position="683"/>
        <end position="693"/>
    </location>
</feature>
<feature type="compositionally biased region" description="Pro residues" evidence="8">
    <location>
        <begin position="701"/>
        <end position="714"/>
    </location>
</feature>
<feature type="compositionally biased region" description="Low complexity" evidence="8">
    <location>
        <begin position="730"/>
        <end position="740"/>
    </location>
</feature>
<feature type="compositionally biased region" description="Acidic residues" evidence="8">
    <location>
        <begin position="875"/>
        <end position="888"/>
    </location>
</feature>
<feature type="modified residue" description="Phosphoserine" evidence="12">
    <location>
        <position position="12"/>
    </location>
</feature>
<feature type="modified residue" description="Phosphoserine" evidence="12">
    <location>
        <position position="338"/>
    </location>
</feature>
<feature type="modified residue" description="Phosphoserine" evidence="12">
    <location>
        <position position="390"/>
    </location>
</feature>
<feature type="modified residue" description="Phosphotyrosine" evidence="12">
    <location>
        <position position="683"/>
    </location>
</feature>
<feature type="modified residue" description="Phosphoserine" evidence="12">
    <location>
        <position position="685"/>
    </location>
</feature>
<feature type="modified residue" description="Phosphoserine" evidence="12">
    <location>
        <position position="687"/>
    </location>
</feature>
<feature type="modified residue" description="Phosphoserine" evidence="2">
    <location>
        <position position="756"/>
    </location>
</feature>
<feature type="modified residue" description="Phosphoserine" evidence="2">
    <location>
        <position position="767"/>
    </location>
</feature>
<feature type="modified residue" description="Phosphoserine" evidence="11 12">
    <location>
        <position position="906"/>
    </location>
</feature>
<feature type="splice variant" id="VSP_010890" description="In isoform 2." evidence="9">
    <location>
        <begin position="271"/>
        <end position="319"/>
    </location>
</feature>
<comment type="function">
    <text>May function as an adapter protein or regulator of Ras signaling pathways.</text>
</comment>
<comment type="subunit">
    <text evidence="1">Interacts with RAF1, RAB2L and RAL GTPase proteins.</text>
</comment>
<comment type="interaction">
    <interactant intactId="EBI-771429">
        <id>Q80YA9</id>
    </interactant>
    <interactant intactId="EBI-400152">
        <id>Q9D415</id>
        <label>Dlgap1</label>
    </interactant>
    <organismsDiffer>false</organismsDiffer>
    <experiments>3</experiments>
</comment>
<comment type="subcellular location">
    <subcellularLocation>
        <location evidence="1">Cytoplasm</location>
    </subcellularLocation>
    <subcellularLocation>
        <location evidence="1">Membrane</location>
        <topology evidence="1">Peripheral membrane protein</topology>
    </subcellularLocation>
</comment>
<comment type="alternative products">
    <event type="alternative splicing"/>
    <isoform>
        <id>Q80YA9-1</id>
        <name>1</name>
        <sequence type="displayed"/>
    </isoform>
    <isoform>
        <id>Q80YA9-2</id>
        <name>2</name>
        <sequence type="described" ref="VSP_010890"/>
    </isoform>
</comment>
<comment type="PTM">
    <text evidence="1">Phosphorylated on tyrosine.</text>
</comment>
<comment type="similarity">
    <text evidence="10">Belongs to the CNKSR family.</text>
</comment>
<comment type="sequence caution" evidence="10">
    <conflict type="erroneous initiation">
        <sequence resource="EMBL-CDS" id="BAC65681"/>
    </conflict>
</comment>
<sequence>MALIMEPVSKWSPSQVVDWMKGLDDCLQQYIKNFEREKISGDQLLRITHQELEDLGVSRIGHQELILEAVDLLCALNYGLETENLKTLSHKLNASAKNLQNFITGRRRSGHYDGRTSRKLPNDFLTSVVDLIGAAKSLLAWLDRSPFAAVTDYSVTRNNVIQLCLELTTIVQQDCTVYETENKILHVCKTLSGVCDHIISLSSDPLVSQSAHLEVIQLANIKPSEGLGMYIKSTYDGLHVITGTTENSPADRCKKIHAGDEVIQVNHQTVVGWQLKNLVNALREDPSGVILTLKKRPQSMLTSAPALLKNMRWKPLALQPLIPRSPTSSVATPSSTISTPTKRDSSALQDLYIPPPPAEPYIPRDEKGNLPCEDLRGHMVGKPVHKGSESPNSFLDQEYRKRFNIVEEDTVLYCYEYEKGRSSSQGRRESTPTYGKLRPISMPVEYNWVGDYEDPNKMKRDSRRENSLLRYMSNEKIAQEEYMFQRNSKKDTGKKSKKKGDKSNSPAHYSLLPSLQMDALRQDIMGTPVPETTLYHTFQQSSLQHKSKKKNKGAISGKSKRRISCKDLGRGDCEGWLWKKKDAKSYFSQKWKKYWFVLKDASLYWYINEEDEKAEGFISLPEFKIDRASECRKKYAFKACHPKIKSFYFAAEHLDDMNRWLNRINMLTAGYAERERIKQEQDYWSESDKEEADTPSTPKQDSPPPPYDTYPRPPSMSCASPYVEAKHSRLSSTETSQSQSSHEEFRQEVTGSSAVSPIRKTASQRRSWQDLIETPLTSSGLHYLQTLPLEDSVFSDSAAISPEHRRQSTLPTQKCHLQDHYGPYPLAESERMQVLNGNGGKPRSFTLPRDSGFNHCCLNTPVSACDPQDDIQPPEVEEEEEEEEEEAAGENVGEKNENREEKLGDSLQDLYRALEEASLSPLGEHRISTKMEYKLSFIKRCNDPVMNEKLHRLRILKSTLKAREGEVAIIDKVLDNPDLTSKEFQQWKQMYLDLFLDICQSTTSNDPLSISSEVDVLTSSLTHTHSYIETHV</sequence>
<gene>
    <name type="primary">Cnksr2</name>
    <name type="synonym">Kiaa0902</name>
</gene>